<name>HMDH_RABIT</name>
<gene>
    <name type="primary">HMGCR</name>
</gene>
<accession>Q29512</accession>
<feature type="chain" id="PRO_0000114423" description="3-hydroxy-3-methylglutaryl-coenzyme A reductase">
    <location>
        <begin position="1"/>
        <end position="888"/>
    </location>
</feature>
<feature type="topological domain" description="Cytoplasmic" evidence="1">
    <location>
        <begin position="1"/>
        <end position="9"/>
    </location>
</feature>
<feature type="transmembrane region" description="Helical" evidence="1">
    <location>
        <begin position="10"/>
        <end position="39"/>
    </location>
</feature>
<feature type="topological domain" description="Lumenal" evidence="1">
    <location>
        <begin position="40"/>
        <end position="56"/>
    </location>
</feature>
<feature type="transmembrane region" description="Helical" evidence="1">
    <location>
        <begin position="57"/>
        <end position="78"/>
    </location>
</feature>
<feature type="topological domain" description="Cytoplasmic" evidence="1">
    <location>
        <begin position="79"/>
        <end position="89"/>
    </location>
</feature>
<feature type="transmembrane region" description="Helical" evidence="1">
    <location>
        <begin position="90"/>
        <end position="114"/>
    </location>
</feature>
<feature type="topological domain" description="Lumenal" evidence="1">
    <location>
        <begin position="115"/>
        <end position="123"/>
    </location>
</feature>
<feature type="transmembrane region" description="Helical" evidence="1">
    <location>
        <begin position="124"/>
        <end position="149"/>
    </location>
</feature>
<feature type="topological domain" description="Cytoplasmic" evidence="1">
    <location>
        <begin position="150"/>
        <end position="159"/>
    </location>
</feature>
<feature type="transmembrane region" description="Helical" evidence="1">
    <location>
        <begin position="160"/>
        <end position="187"/>
    </location>
</feature>
<feature type="topological domain" description="Lumenal" evidence="1">
    <location>
        <begin position="188"/>
        <end position="191"/>
    </location>
</feature>
<feature type="transmembrane region" description="Helical" evidence="1">
    <location>
        <begin position="192"/>
        <end position="220"/>
    </location>
</feature>
<feature type="topological domain" description="Cytoplasmic" evidence="1">
    <location>
        <begin position="221"/>
        <end position="248"/>
    </location>
</feature>
<feature type="transmembrane region" description="Helical" evidence="1">
    <location>
        <begin position="249"/>
        <end position="275"/>
    </location>
</feature>
<feature type="topological domain" description="Lumenal" evidence="1">
    <location>
        <begin position="276"/>
        <end position="314"/>
    </location>
</feature>
<feature type="transmembrane region" description="Helical" evidence="1">
    <location>
        <begin position="315"/>
        <end position="339"/>
    </location>
</feature>
<feature type="topological domain" description="Cytoplasmic" evidence="1">
    <location>
        <begin position="340"/>
        <end position="888"/>
    </location>
</feature>
<feature type="domain" description="SSD" evidence="5">
    <location>
        <begin position="61"/>
        <end position="218"/>
    </location>
</feature>
<feature type="short sequence motif" description="INSIG-binding motif" evidence="2">
    <location>
        <begin position="75"/>
        <end position="78"/>
    </location>
</feature>
<feature type="active site" description="Charge relay system" evidence="2">
    <location>
        <position position="559"/>
    </location>
</feature>
<feature type="active site" description="Charge relay system" evidence="2">
    <location>
        <position position="691"/>
    </location>
</feature>
<feature type="active site" description="Charge relay system" evidence="2">
    <location>
        <position position="767"/>
    </location>
</feature>
<feature type="active site" description="Proton donor" evidence="6">
    <location>
        <position position="866"/>
    </location>
</feature>
<feature type="modified residue" description="Phosphoserine; by AMPK" evidence="3">
    <location>
        <position position="872"/>
    </location>
</feature>
<feature type="glycosylation site" description="N-linked (GlcNAc...) asparagine" evidence="4">
    <location>
        <position position="281"/>
    </location>
</feature>
<feature type="glycosylation site" description="N-linked (GlcNAc...) asparagine" evidence="4">
    <location>
        <position position="296"/>
    </location>
</feature>
<feature type="cross-link" description="Glycyl lysine isopeptide (Lys-Gly) (interchain with G-Cter in ubiquitin)" evidence="1">
    <location>
        <position position="89"/>
    </location>
</feature>
<feature type="cross-link" description="Glycyl lysine isopeptide (Lys-Gly) (interchain with G-Cter in ubiquitin)" evidence="1">
    <location>
        <position position="248"/>
    </location>
</feature>
<evidence type="ECO:0000250" key="1">
    <source>
        <dbReference type="UniProtKB" id="P00347"/>
    </source>
</evidence>
<evidence type="ECO:0000250" key="2">
    <source>
        <dbReference type="UniProtKB" id="P04035"/>
    </source>
</evidence>
<evidence type="ECO:0000250" key="3">
    <source>
        <dbReference type="UniProtKB" id="P51639"/>
    </source>
</evidence>
<evidence type="ECO:0000255" key="4"/>
<evidence type="ECO:0000255" key="5">
    <source>
        <dbReference type="PROSITE-ProRule" id="PRU00199"/>
    </source>
</evidence>
<evidence type="ECO:0000255" key="6">
    <source>
        <dbReference type="PROSITE-ProRule" id="PRU10003"/>
    </source>
</evidence>
<evidence type="ECO:0000305" key="7"/>
<comment type="function">
    <text evidence="2">Catalyzes the conversion of (3S)-hydroxy-3-methylglutaryl-CoA (HMG-CoA) to mevalonic acid, the rate-limiting step in the synthesis of cholesterol and other isoprenoids, thus plays a critical role in cellular cholesterol homeostasis.</text>
</comment>
<comment type="catalytic activity">
    <reaction evidence="2">
        <text>(R)-mevalonate + 2 NADP(+) + CoA = (3S)-3-hydroxy-3-methylglutaryl-CoA + 2 NADPH + 2 H(+)</text>
        <dbReference type="Rhea" id="RHEA:15989"/>
        <dbReference type="ChEBI" id="CHEBI:15378"/>
        <dbReference type="ChEBI" id="CHEBI:36464"/>
        <dbReference type="ChEBI" id="CHEBI:43074"/>
        <dbReference type="ChEBI" id="CHEBI:57287"/>
        <dbReference type="ChEBI" id="CHEBI:57783"/>
        <dbReference type="ChEBI" id="CHEBI:58349"/>
        <dbReference type="EC" id="1.1.1.34"/>
    </reaction>
    <physiologicalReaction direction="right-to-left" evidence="2">
        <dbReference type="Rhea" id="RHEA:15991"/>
    </physiologicalReaction>
</comment>
<comment type="activity regulation">
    <text evidence="1 2">Regulated by a negative feedback mechanism through sterols and non-sterol metabolites derived from mevalonate (By similarity). Phosphorylation at Ser-872 down-regulates the catalytic activity (By similarity).</text>
</comment>
<comment type="pathway">
    <text>Metabolic intermediate biosynthesis; (R)-mevalonate biosynthesis; (R)-mevalonate from acetyl-CoA: step 3/3.</text>
</comment>
<comment type="subunit">
    <text evidence="2">Homotetramer. Homodimer. Interacts (via its SSD) with INSIG1; the interaction, accelerated by sterols, leads to the recruitment of HMGCR to AMFR/gp78 for its ubiquitination by the sterol-mediated ERAD pathway. Interacts with UBIAD1.</text>
</comment>
<comment type="subcellular location">
    <subcellularLocation>
        <location evidence="2">Endoplasmic reticulum membrane</location>
        <topology evidence="1">Multi-pass membrane protein</topology>
    </subcellularLocation>
    <subcellularLocation>
        <location evidence="2">Peroxisome membrane</location>
        <topology evidence="1">Multi-pass membrane protein</topology>
    </subcellularLocation>
</comment>
<comment type="PTM">
    <text evidence="2">Undergoes sterol-mediated ubiquitination and ER-associated degradation (ERAD). Accumulation of sterols in the endoplasmic reticulum (ER) membrane, triggers binding of the reductase to the ER membrane protein INSIG1 or INSIG2. The INSIG1 binding leads to the recruitment of the ubiquitin ligase, AMFR/gp78, RNF139 or RNF145, initiating ubiquitination of the reductase. The ubiquitinated reductase is then extracted from the ER membrane and delivered to cytosolic 26S proteosomes by a mechanism probably mediated by the ATPase Valosin-containing protein VCP/p97. The INSIG2-binding leads to the recruitment of the ubiquitin ligase RNF139, initiating ubiquitination of the reductase. Lys-248 is the main site of ubiquitination. Ubiquitination is enhanced by the presence of a geranylgeranylated protein.</text>
</comment>
<comment type="PTM">
    <text evidence="2">N-glycosylated. Deglycosylated by NGLY1 on release from the endoplasmic reticulum (ER) in a sterol-mediated manner.</text>
</comment>
<comment type="PTM">
    <text evidence="1">Phosphorylated. Phosphorylation at Ser-872 reduces the catalytic activity.</text>
</comment>
<comment type="similarity">
    <text evidence="7">Belongs to the HMG-CoA reductase family.</text>
</comment>
<proteinExistence type="inferred from homology"/>
<keyword id="KW-0152">Cholesterol biosynthesis</keyword>
<keyword id="KW-0153">Cholesterol metabolism</keyword>
<keyword id="KW-0256">Endoplasmic reticulum</keyword>
<keyword id="KW-0325">Glycoprotein</keyword>
<keyword id="KW-1017">Isopeptide bond</keyword>
<keyword id="KW-0444">Lipid biosynthesis</keyword>
<keyword id="KW-0443">Lipid metabolism</keyword>
<keyword id="KW-0472">Membrane</keyword>
<keyword id="KW-0521">NADP</keyword>
<keyword id="KW-0560">Oxidoreductase</keyword>
<keyword id="KW-0576">Peroxisome</keyword>
<keyword id="KW-0597">Phosphoprotein</keyword>
<keyword id="KW-1185">Reference proteome</keyword>
<keyword id="KW-0752">Steroid biosynthesis</keyword>
<keyword id="KW-0753">Steroid metabolism</keyword>
<keyword id="KW-0756">Sterol biosynthesis</keyword>
<keyword id="KW-1207">Sterol metabolism</keyword>
<keyword id="KW-0812">Transmembrane</keyword>
<keyword id="KW-1133">Transmembrane helix</keyword>
<keyword id="KW-0832">Ubl conjugation</keyword>
<dbReference type="EC" id="1.1.1.34" evidence="2"/>
<dbReference type="SMR" id="Q29512"/>
<dbReference type="FunCoup" id="Q29512">
    <property type="interactions" value="973"/>
</dbReference>
<dbReference type="STRING" id="9986.ENSOCUP00000014975"/>
<dbReference type="GlyCosmos" id="Q29512">
    <property type="glycosylation" value="2 sites, No reported glycans"/>
</dbReference>
<dbReference type="PaxDb" id="9986-ENSOCUP00000014975"/>
<dbReference type="eggNOG" id="KOG2480">
    <property type="taxonomic scope" value="Eukaryota"/>
</dbReference>
<dbReference type="InParanoid" id="Q29512"/>
<dbReference type="UniPathway" id="UPA00058">
    <property type="reaction ID" value="UER00103"/>
</dbReference>
<dbReference type="Proteomes" id="UP000001811">
    <property type="component" value="Unplaced"/>
</dbReference>
<dbReference type="GO" id="GO:0005783">
    <property type="term" value="C:endoplasmic reticulum"/>
    <property type="evidence" value="ECO:0000250"/>
    <property type="project" value="UniProtKB"/>
</dbReference>
<dbReference type="GO" id="GO:0005789">
    <property type="term" value="C:endoplasmic reticulum membrane"/>
    <property type="evidence" value="ECO:0007669"/>
    <property type="project" value="UniProtKB-SubCell"/>
</dbReference>
<dbReference type="GO" id="GO:0005778">
    <property type="term" value="C:peroxisomal membrane"/>
    <property type="evidence" value="ECO:0000250"/>
    <property type="project" value="UniProtKB"/>
</dbReference>
<dbReference type="GO" id="GO:0004420">
    <property type="term" value="F:hydroxymethylglutaryl-CoA reductase (NADPH) activity"/>
    <property type="evidence" value="ECO:0007669"/>
    <property type="project" value="UniProtKB-EC"/>
</dbReference>
<dbReference type="GO" id="GO:0050661">
    <property type="term" value="F:NADP binding"/>
    <property type="evidence" value="ECO:0007669"/>
    <property type="project" value="InterPro"/>
</dbReference>
<dbReference type="GO" id="GO:0006695">
    <property type="term" value="P:cholesterol biosynthetic process"/>
    <property type="evidence" value="ECO:0007669"/>
    <property type="project" value="UniProtKB-KW"/>
</dbReference>
<dbReference type="GO" id="GO:0015936">
    <property type="term" value="P:coenzyme A metabolic process"/>
    <property type="evidence" value="ECO:0007669"/>
    <property type="project" value="InterPro"/>
</dbReference>
<dbReference type="GO" id="GO:0008299">
    <property type="term" value="P:isoprenoid biosynthetic process"/>
    <property type="evidence" value="ECO:0007669"/>
    <property type="project" value="InterPro"/>
</dbReference>
<dbReference type="CDD" id="cd00643">
    <property type="entry name" value="HMG-CoA_reductase_classI"/>
    <property type="match status" value="1"/>
</dbReference>
<dbReference type="FunFam" id="1.10.3270.10:FF:000001">
    <property type="entry name" value="3-hydroxy-3-methylglutaryl coenzyme A reductase"/>
    <property type="match status" value="1"/>
</dbReference>
<dbReference type="FunFam" id="3.30.70.420:FF:000001">
    <property type="entry name" value="3-hydroxy-3-methylglutaryl coenzyme A reductase"/>
    <property type="match status" value="1"/>
</dbReference>
<dbReference type="FunFam" id="3.90.770.10:FF:000002">
    <property type="entry name" value="3-hydroxy-3-methylglutaryl coenzyme A reductase"/>
    <property type="match status" value="1"/>
</dbReference>
<dbReference type="Gene3D" id="3.90.770.10">
    <property type="entry name" value="3-hydroxy-3-methylglutaryl-coenzyme A Reductase, Chain A, domain 2"/>
    <property type="match status" value="1"/>
</dbReference>
<dbReference type="Gene3D" id="1.10.3270.10">
    <property type="entry name" value="HMGR, N-terminal domain"/>
    <property type="match status" value="1"/>
</dbReference>
<dbReference type="Gene3D" id="3.30.70.420">
    <property type="entry name" value="Hydroxymethylglutaryl-CoA reductase, class I/II, NAD/NADP-binding domain"/>
    <property type="match status" value="1"/>
</dbReference>
<dbReference type="InterPro" id="IPR002202">
    <property type="entry name" value="HMG_CoA_Rdtase"/>
</dbReference>
<dbReference type="InterPro" id="IPR023074">
    <property type="entry name" value="HMG_CoA_Rdtase_cat_sf"/>
</dbReference>
<dbReference type="InterPro" id="IPR023076">
    <property type="entry name" value="HMG_CoA_Rdtase_CS"/>
</dbReference>
<dbReference type="InterPro" id="IPR004554">
    <property type="entry name" value="HMG_CoA_Rdtase_eu_arc"/>
</dbReference>
<dbReference type="InterPro" id="IPR004816">
    <property type="entry name" value="HMG_CoA_Rdtase_metazoan"/>
</dbReference>
<dbReference type="InterPro" id="IPR023282">
    <property type="entry name" value="HMG_CoA_Rdtase_N"/>
</dbReference>
<dbReference type="InterPro" id="IPR009023">
    <property type="entry name" value="HMG_CoA_Rdtase_NAD(P)-bd_sf"/>
</dbReference>
<dbReference type="InterPro" id="IPR009029">
    <property type="entry name" value="HMG_CoA_Rdtase_sub-bd_dom_sf"/>
</dbReference>
<dbReference type="InterPro" id="IPR053958">
    <property type="entry name" value="HMGCR/SNAP/NPC1-like_SSD"/>
</dbReference>
<dbReference type="InterPro" id="IPR000731">
    <property type="entry name" value="SSD"/>
</dbReference>
<dbReference type="NCBIfam" id="TIGR00920">
    <property type="entry name" value="2A060605"/>
    <property type="match status" value="1"/>
</dbReference>
<dbReference type="NCBIfam" id="TIGR00533">
    <property type="entry name" value="HMG_CoA_R_NADP"/>
    <property type="match status" value="1"/>
</dbReference>
<dbReference type="PANTHER" id="PTHR10572">
    <property type="entry name" value="3-HYDROXY-3-METHYLGLUTARYL-COENZYME A REDUCTASE"/>
    <property type="match status" value="1"/>
</dbReference>
<dbReference type="PANTHER" id="PTHR10572:SF24">
    <property type="entry name" value="3-HYDROXY-3-METHYLGLUTARYL-COENZYME A REDUCTASE"/>
    <property type="match status" value="1"/>
</dbReference>
<dbReference type="Pfam" id="PF00368">
    <property type="entry name" value="HMG-CoA_red"/>
    <property type="match status" value="1"/>
</dbReference>
<dbReference type="Pfam" id="PF12349">
    <property type="entry name" value="Sterol-sensing"/>
    <property type="match status" value="1"/>
</dbReference>
<dbReference type="PRINTS" id="PR00071">
    <property type="entry name" value="HMGCOARDTASE"/>
</dbReference>
<dbReference type="SUPFAM" id="SSF82866">
    <property type="entry name" value="Multidrug efflux transporter AcrB transmembrane domain"/>
    <property type="match status" value="1"/>
</dbReference>
<dbReference type="SUPFAM" id="SSF55035">
    <property type="entry name" value="NAD-binding domain of HMG-CoA reductase"/>
    <property type="match status" value="1"/>
</dbReference>
<dbReference type="SUPFAM" id="SSF56542">
    <property type="entry name" value="Substrate-binding domain of HMG-CoA reductase"/>
    <property type="match status" value="1"/>
</dbReference>
<dbReference type="PROSITE" id="PS00066">
    <property type="entry name" value="HMG_COA_REDUCTASE_1"/>
    <property type="match status" value="1"/>
</dbReference>
<dbReference type="PROSITE" id="PS00318">
    <property type="entry name" value="HMG_COA_REDUCTASE_2"/>
    <property type="match status" value="1"/>
</dbReference>
<dbReference type="PROSITE" id="PS01192">
    <property type="entry name" value="HMG_COA_REDUCTASE_3"/>
    <property type="match status" value="1"/>
</dbReference>
<dbReference type="PROSITE" id="PS50065">
    <property type="entry name" value="HMG_COA_REDUCTASE_4"/>
    <property type="match status" value="1"/>
</dbReference>
<dbReference type="PROSITE" id="PS50156">
    <property type="entry name" value="SSD"/>
    <property type="match status" value="1"/>
</dbReference>
<protein>
    <recommendedName>
        <fullName>3-hydroxy-3-methylglutaryl-coenzyme A reductase</fullName>
        <shortName>HMG-CoA reductase</shortName>
        <ecNumber evidence="2">1.1.1.34</ecNumber>
    </recommendedName>
</protein>
<organism>
    <name type="scientific">Oryctolagus cuniculus</name>
    <name type="common">Rabbit</name>
    <dbReference type="NCBI Taxonomy" id="9986"/>
    <lineage>
        <taxon>Eukaryota</taxon>
        <taxon>Metazoa</taxon>
        <taxon>Chordata</taxon>
        <taxon>Craniata</taxon>
        <taxon>Vertebrata</taxon>
        <taxon>Euteleostomi</taxon>
        <taxon>Mammalia</taxon>
        <taxon>Eutheria</taxon>
        <taxon>Euarchontoglires</taxon>
        <taxon>Glires</taxon>
        <taxon>Lagomorpha</taxon>
        <taxon>Leporidae</taxon>
        <taxon>Oryctolagus</taxon>
    </lineage>
</organism>
<sequence>MLSRLFRMHGLFVASHPWEVIVGTVTLTICMMSMNMFTGNDKICGWNYECPKFEEDVLSSDIIILTITRCIAILYIYFQFQNLRQLGSKYILGIAGLFTIFSSFVFSTVVIHFLDKELTGLNEALPFFLLLIDLSRASALAKFALSSNSQDEVRENIARGMAILGPTFTLDALVECLVIGVGTMSGVRQLEIMCCFGCMSVLANYFVFMTFFPACVSLVLELSRESREGRPIWQLSHFARVLEEEENKPNPVTQRVKMIMSLGLVLVHAHSRWIADPSPQNSTADNSKVSLGLDENVSKRIEPSVSLWQFYLSKMISMDIEQVITLSLALLLAVKYIFFEQAETESTLSLKNPITSPVVTQKKVPDSCCRREPVVVRNNQKFCSVEEEAGMSQDRKVEVIKPLVAETDSPHRAAFVVGGSSFPDTSLVLETKEPEIELPKEPRPNEECLQILGNAEKGAKFLSDAEIIQLVNAKHIPAYKLETLMETHERGVSIRRQLLSKKLPEPSSLQYLPYRDYNYSLVLGACCENVIGYMPIPVGVVGPLCLDGKEFQVPMATTEGCLVASTNRGCRAICLGGGASSRVLADGMTRGPVVRLPRACDSAEVKAWLETPEGFAVIKEAFDSTSRFARLQKLHISMAGRNLYIRFQSRTGDAMGMNMISKGTEKALSKLHEYFPEMQILAVSGNYCTDKKPAAVNWIEGRGKTVVCEAVIPAKVVREVLKTTTEAMIDVNINKNLVGSAMAGSIGGYNAHAANYVTAIYIACGQDAAQNVGSSNCITLMEASGPPNEDLYISCTMPSIEIGTVGGGTNLLPQQACLQMLGVQGACKDSPGENARQLARIVCGTVMAGELSLMAALAAGHLVKSHMIHNRSKINLQDLEGACTKKAA</sequence>
<reference key="1">
    <citation type="submission" date="1996-07" db="EMBL/GenBank/DDBJ databases">
        <authorList>
            <person name="Yamada M."/>
            <person name="Yoshimatsu M."/>
            <person name="Kinowaki M."/>
            <person name="Kai M."/>
            <person name="Kondo K."/>
            <person name="Setoguchi T."/>
        </authorList>
    </citation>
    <scope>NUCLEOTIDE SEQUENCE</scope>
    <source>
        <strain>New Zealand white</strain>
        <tissue>Liver</tissue>
    </source>
</reference>